<organism>
    <name type="scientific">Aromatoleum aromaticum (strain DSM 19018 / LMG 30748 / EbN1)</name>
    <name type="common">Azoarcus sp. (strain EbN1)</name>
    <dbReference type="NCBI Taxonomy" id="76114"/>
    <lineage>
        <taxon>Bacteria</taxon>
        <taxon>Pseudomonadati</taxon>
        <taxon>Pseudomonadota</taxon>
        <taxon>Betaproteobacteria</taxon>
        <taxon>Rhodocyclales</taxon>
        <taxon>Rhodocyclaceae</taxon>
        <taxon>Aromatoleum</taxon>
    </lineage>
</organism>
<name>SYA_AROAE</name>
<reference key="1">
    <citation type="journal article" date="2005" name="Arch. Microbiol.">
        <title>The genome sequence of an anaerobic aromatic-degrading denitrifying bacterium, strain EbN1.</title>
        <authorList>
            <person name="Rabus R."/>
            <person name="Kube M."/>
            <person name="Heider J."/>
            <person name="Beck A."/>
            <person name="Heitmann K."/>
            <person name="Widdel F."/>
            <person name="Reinhardt R."/>
        </authorList>
    </citation>
    <scope>NUCLEOTIDE SEQUENCE [LARGE SCALE GENOMIC DNA]</scope>
    <source>
        <strain>DSM 19018 / LMG 30748 / EbN1</strain>
    </source>
</reference>
<protein>
    <recommendedName>
        <fullName evidence="1">Alanine--tRNA ligase</fullName>
        <ecNumber evidence="1">6.1.1.7</ecNumber>
    </recommendedName>
    <alternativeName>
        <fullName evidence="1">Alanyl-tRNA synthetase</fullName>
        <shortName evidence="1">AlaRS</shortName>
    </alternativeName>
</protein>
<accession>Q5P7Q3</accession>
<feature type="chain" id="PRO_0000075049" description="Alanine--tRNA ligase">
    <location>
        <begin position="1"/>
        <end position="873"/>
    </location>
</feature>
<feature type="binding site" evidence="1">
    <location>
        <position position="563"/>
    </location>
    <ligand>
        <name>Zn(2+)</name>
        <dbReference type="ChEBI" id="CHEBI:29105"/>
    </ligand>
</feature>
<feature type="binding site" evidence="1">
    <location>
        <position position="567"/>
    </location>
    <ligand>
        <name>Zn(2+)</name>
        <dbReference type="ChEBI" id="CHEBI:29105"/>
    </ligand>
</feature>
<feature type="binding site" evidence="1">
    <location>
        <position position="664"/>
    </location>
    <ligand>
        <name>Zn(2+)</name>
        <dbReference type="ChEBI" id="CHEBI:29105"/>
    </ligand>
</feature>
<feature type="binding site" evidence="1">
    <location>
        <position position="668"/>
    </location>
    <ligand>
        <name>Zn(2+)</name>
        <dbReference type="ChEBI" id="CHEBI:29105"/>
    </ligand>
</feature>
<gene>
    <name evidence="1" type="primary">alaS</name>
    <name type="ordered locus">AZOSEA05360</name>
    <name type="ORF">ebA1021</name>
</gene>
<dbReference type="EC" id="6.1.1.7" evidence="1"/>
<dbReference type="EMBL" id="CR555306">
    <property type="protein sequence ID" value="CAI06658.1"/>
    <property type="molecule type" value="Genomic_DNA"/>
</dbReference>
<dbReference type="RefSeq" id="WP_011236388.1">
    <property type="nucleotide sequence ID" value="NC_006513.1"/>
</dbReference>
<dbReference type="SMR" id="Q5P7Q3"/>
<dbReference type="STRING" id="76114.ebA1021"/>
<dbReference type="KEGG" id="eba:ebA1021"/>
<dbReference type="eggNOG" id="COG0013">
    <property type="taxonomic scope" value="Bacteria"/>
</dbReference>
<dbReference type="HOGENOM" id="CLU_004485_1_1_4"/>
<dbReference type="OrthoDB" id="9803884at2"/>
<dbReference type="Proteomes" id="UP000006552">
    <property type="component" value="Chromosome"/>
</dbReference>
<dbReference type="GO" id="GO:0005829">
    <property type="term" value="C:cytosol"/>
    <property type="evidence" value="ECO:0007669"/>
    <property type="project" value="TreeGrafter"/>
</dbReference>
<dbReference type="GO" id="GO:0004813">
    <property type="term" value="F:alanine-tRNA ligase activity"/>
    <property type="evidence" value="ECO:0007669"/>
    <property type="project" value="UniProtKB-UniRule"/>
</dbReference>
<dbReference type="GO" id="GO:0002161">
    <property type="term" value="F:aminoacyl-tRNA deacylase activity"/>
    <property type="evidence" value="ECO:0007669"/>
    <property type="project" value="TreeGrafter"/>
</dbReference>
<dbReference type="GO" id="GO:0005524">
    <property type="term" value="F:ATP binding"/>
    <property type="evidence" value="ECO:0007669"/>
    <property type="project" value="UniProtKB-UniRule"/>
</dbReference>
<dbReference type="GO" id="GO:0000049">
    <property type="term" value="F:tRNA binding"/>
    <property type="evidence" value="ECO:0007669"/>
    <property type="project" value="UniProtKB-KW"/>
</dbReference>
<dbReference type="GO" id="GO:0008270">
    <property type="term" value="F:zinc ion binding"/>
    <property type="evidence" value="ECO:0007669"/>
    <property type="project" value="UniProtKB-UniRule"/>
</dbReference>
<dbReference type="GO" id="GO:0006419">
    <property type="term" value="P:alanyl-tRNA aminoacylation"/>
    <property type="evidence" value="ECO:0007669"/>
    <property type="project" value="UniProtKB-UniRule"/>
</dbReference>
<dbReference type="GO" id="GO:0045892">
    <property type="term" value="P:negative regulation of DNA-templated transcription"/>
    <property type="evidence" value="ECO:0007669"/>
    <property type="project" value="TreeGrafter"/>
</dbReference>
<dbReference type="CDD" id="cd00673">
    <property type="entry name" value="AlaRS_core"/>
    <property type="match status" value="1"/>
</dbReference>
<dbReference type="FunFam" id="2.40.30.130:FF:000001">
    <property type="entry name" value="Alanine--tRNA ligase"/>
    <property type="match status" value="1"/>
</dbReference>
<dbReference type="FunFam" id="3.10.310.40:FF:000001">
    <property type="entry name" value="Alanine--tRNA ligase"/>
    <property type="match status" value="1"/>
</dbReference>
<dbReference type="FunFam" id="3.30.54.20:FF:000001">
    <property type="entry name" value="Alanine--tRNA ligase"/>
    <property type="match status" value="1"/>
</dbReference>
<dbReference type="FunFam" id="3.30.930.10:FF:000004">
    <property type="entry name" value="Alanine--tRNA ligase"/>
    <property type="match status" value="1"/>
</dbReference>
<dbReference type="FunFam" id="3.30.980.10:FF:000004">
    <property type="entry name" value="Alanine--tRNA ligase, cytoplasmic"/>
    <property type="match status" value="1"/>
</dbReference>
<dbReference type="Gene3D" id="2.40.30.130">
    <property type="match status" value="1"/>
</dbReference>
<dbReference type="Gene3D" id="3.10.310.40">
    <property type="match status" value="1"/>
</dbReference>
<dbReference type="Gene3D" id="3.30.54.20">
    <property type="match status" value="1"/>
</dbReference>
<dbReference type="Gene3D" id="6.10.250.550">
    <property type="match status" value="1"/>
</dbReference>
<dbReference type="Gene3D" id="3.30.930.10">
    <property type="entry name" value="Bira Bifunctional Protein, Domain 2"/>
    <property type="match status" value="1"/>
</dbReference>
<dbReference type="Gene3D" id="3.30.980.10">
    <property type="entry name" value="Threonyl-trna Synthetase, Chain A, domain 2"/>
    <property type="match status" value="1"/>
</dbReference>
<dbReference type="HAMAP" id="MF_00036_B">
    <property type="entry name" value="Ala_tRNA_synth_B"/>
    <property type="match status" value="1"/>
</dbReference>
<dbReference type="InterPro" id="IPR045864">
    <property type="entry name" value="aa-tRNA-synth_II/BPL/LPL"/>
</dbReference>
<dbReference type="InterPro" id="IPR002318">
    <property type="entry name" value="Ala-tRNA-lgiase_IIc"/>
</dbReference>
<dbReference type="InterPro" id="IPR018162">
    <property type="entry name" value="Ala-tRNA-ligase_IIc_anticod-bd"/>
</dbReference>
<dbReference type="InterPro" id="IPR018165">
    <property type="entry name" value="Ala-tRNA-synth_IIc_core"/>
</dbReference>
<dbReference type="InterPro" id="IPR018164">
    <property type="entry name" value="Ala-tRNA-synth_IIc_N"/>
</dbReference>
<dbReference type="InterPro" id="IPR050058">
    <property type="entry name" value="Ala-tRNA_ligase"/>
</dbReference>
<dbReference type="InterPro" id="IPR023033">
    <property type="entry name" value="Ala_tRNA_ligase_euk/bac"/>
</dbReference>
<dbReference type="InterPro" id="IPR003156">
    <property type="entry name" value="DHHA1_dom"/>
</dbReference>
<dbReference type="InterPro" id="IPR018163">
    <property type="entry name" value="Thr/Ala-tRNA-synth_IIc_edit"/>
</dbReference>
<dbReference type="InterPro" id="IPR009000">
    <property type="entry name" value="Transl_B-barrel_sf"/>
</dbReference>
<dbReference type="InterPro" id="IPR012947">
    <property type="entry name" value="tRNA_SAD"/>
</dbReference>
<dbReference type="NCBIfam" id="TIGR00344">
    <property type="entry name" value="alaS"/>
    <property type="match status" value="1"/>
</dbReference>
<dbReference type="PANTHER" id="PTHR11777:SF9">
    <property type="entry name" value="ALANINE--TRNA LIGASE, CYTOPLASMIC"/>
    <property type="match status" value="1"/>
</dbReference>
<dbReference type="PANTHER" id="PTHR11777">
    <property type="entry name" value="ALANYL-TRNA SYNTHETASE"/>
    <property type="match status" value="1"/>
</dbReference>
<dbReference type="Pfam" id="PF02272">
    <property type="entry name" value="DHHA1"/>
    <property type="match status" value="1"/>
</dbReference>
<dbReference type="Pfam" id="PF01411">
    <property type="entry name" value="tRNA-synt_2c"/>
    <property type="match status" value="1"/>
</dbReference>
<dbReference type="Pfam" id="PF07973">
    <property type="entry name" value="tRNA_SAD"/>
    <property type="match status" value="1"/>
</dbReference>
<dbReference type="PRINTS" id="PR00980">
    <property type="entry name" value="TRNASYNTHALA"/>
</dbReference>
<dbReference type="SMART" id="SM00863">
    <property type="entry name" value="tRNA_SAD"/>
    <property type="match status" value="1"/>
</dbReference>
<dbReference type="SUPFAM" id="SSF55681">
    <property type="entry name" value="Class II aaRS and biotin synthetases"/>
    <property type="match status" value="1"/>
</dbReference>
<dbReference type="SUPFAM" id="SSF101353">
    <property type="entry name" value="Putative anticodon-binding domain of alanyl-tRNA synthetase (AlaRS)"/>
    <property type="match status" value="1"/>
</dbReference>
<dbReference type="SUPFAM" id="SSF55186">
    <property type="entry name" value="ThrRS/AlaRS common domain"/>
    <property type="match status" value="1"/>
</dbReference>
<dbReference type="SUPFAM" id="SSF50447">
    <property type="entry name" value="Translation proteins"/>
    <property type="match status" value="1"/>
</dbReference>
<dbReference type="PROSITE" id="PS50860">
    <property type="entry name" value="AA_TRNA_LIGASE_II_ALA"/>
    <property type="match status" value="1"/>
</dbReference>
<comment type="function">
    <text evidence="1">Catalyzes the attachment of alanine to tRNA(Ala) in a two-step reaction: alanine is first activated by ATP to form Ala-AMP and then transferred to the acceptor end of tRNA(Ala). Also edits incorrectly charged Ser-tRNA(Ala) and Gly-tRNA(Ala) via its editing domain.</text>
</comment>
<comment type="catalytic activity">
    <reaction evidence="1">
        <text>tRNA(Ala) + L-alanine + ATP = L-alanyl-tRNA(Ala) + AMP + diphosphate</text>
        <dbReference type="Rhea" id="RHEA:12540"/>
        <dbReference type="Rhea" id="RHEA-COMP:9657"/>
        <dbReference type="Rhea" id="RHEA-COMP:9923"/>
        <dbReference type="ChEBI" id="CHEBI:30616"/>
        <dbReference type="ChEBI" id="CHEBI:33019"/>
        <dbReference type="ChEBI" id="CHEBI:57972"/>
        <dbReference type="ChEBI" id="CHEBI:78442"/>
        <dbReference type="ChEBI" id="CHEBI:78497"/>
        <dbReference type="ChEBI" id="CHEBI:456215"/>
        <dbReference type="EC" id="6.1.1.7"/>
    </reaction>
</comment>
<comment type="cofactor">
    <cofactor evidence="1">
        <name>Zn(2+)</name>
        <dbReference type="ChEBI" id="CHEBI:29105"/>
    </cofactor>
    <text evidence="1">Binds 1 zinc ion per subunit.</text>
</comment>
<comment type="subcellular location">
    <subcellularLocation>
        <location evidence="1">Cytoplasm</location>
    </subcellularLocation>
</comment>
<comment type="domain">
    <text evidence="1">Consists of three domains; the N-terminal catalytic domain, the editing domain and the C-terminal C-Ala domain. The editing domain removes incorrectly charged amino acids, while the C-Ala domain, along with tRNA(Ala), serves as a bridge to cooperatively bring together the editing and aminoacylation centers thus stimulating deacylation of misacylated tRNAs.</text>
</comment>
<comment type="similarity">
    <text evidence="1">Belongs to the class-II aminoacyl-tRNA synthetase family.</text>
</comment>
<proteinExistence type="inferred from homology"/>
<keyword id="KW-0030">Aminoacyl-tRNA synthetase</keyword>
<keyword id="KW-0067">ATP-binding</keyword>
<keyword id="KW-0963">Cytoplasm</keyword>
<keyword id="KW-0436">Ligase</keyword>
<keyword id="KW-0479">Metal-binding</keyword>
<keyword id="KW-0547">Nucleotide-binding</keyword>
<keyword id="KW-0648">Protein biosynthesis</keyword>
<keyword id="KW-1185">Reference proteome</keyword>
<keyword id="KW-0694">RNA-binding</keyword>
<keyword id="KW-0820">tRNA-binding</keyword>
<keyword id="KW-0862">Zinc</keyword>
<evidence type="ECO:0000255" key="1">
    <source>
        <dbReference type="HAMAP-Rule" id="MF_00036"/>
    </source>
</evidence>
<sequence length="873" mass="95217">MKSAEIREKFLKFFESKGHQIVASSSLVPHDDPTLLFTNAGMNQFKDVFLGFDKRPYSRATTSQKCVRAGGKHNDLENVGYTARHHTFFEMLGNFSFGDYFKHDAITYAWELLTEEFGLPKDKLWVTVYADDDEAYDIWTKEIGVPAERVIRIGDNKGARYASDNFWMMGDTGPCGPCTEIFYDHGPEIWGGPPGSPDEDGDRYIEIWNNVFMQFNRDEAGVMHPLPRPSVDTGMGLERVSAVLQHVHSNYEIDLFQTLIRAAARETGCADLDSPSLKVIADHIRACSFLIADGVIPGNEGRGYVLRRIIRRAIRHGYKLGSRAAFFHRLVPDLVTEMGPAYPELKAGQARVADVLKQEEERFFATIENGMAILETELAAMATAGSRTFNGETAFKLHDTYGFPLDLTADVCRERDVTVDAAAFDAAMARQKEQARAAGKFRMAMNLEYEGPETKFHGYERLEERGTVLALYKDGAPVVELQEGDIGVVVLDNTPFYAESGGQVGDRGELRGSAGIFEVEDTQKIQAAVYGHHGVVKTGRLAVGQELGARVDGEARASTQRNHSVTHLMHKALREVLGAHVQQKGSQVDPDKTRFDFAHTAPLSPEEIREVEDLVNAEILANVATEARVMSIDDAQKSGAMMLFGEKYGDEVRVLAIGSSKELCGGTHVARTGDIGLFKIVSEGGVAAGVRRIEAVTGANALRYAQEQERRVQGISALLKVQPDEVAERIAGILDNVRALEKELARMKSRLAASQGDELVAQAVEVRGAKVLAAMLEGADVATLRETLDKLKDKLKSAVIVLAAVADGRVSLIAGVTSDLTAKLKAGELVNMVAQQVGGKGGGRPDMAQAGGTDPAHLPAALASVKAWAEARL</sequence>